<evidence type="ECO:0000255" key="1">
    <source>
        <dbReference type="HAMAP-Rule" id="MF_00083"/>
    </source>
</evidence>
<feature type="chain" id="PRO_1000192963" description="Peptidyl-tRNA hydrolase">
    <location>
        <begin position="1"/>
        <end position="189"/>
    </location>
</feature>
<feature type="active site" description="Proton acceptor" evidence="1">
    <location>
        <position position="19"/>
    </location>
</feature>
<feature type="binding site" evidence="1">
    <location>
        <position position="14"/>
    </location>
    <ligand>
        <name>tRNA</name>
        <dbReference type="ChEBI" id="CHEBI:17843"/>
    </ligand>
</feature>
<feature type="binding site" evidence="1">
    <location>
        <position position="64"/>
    </location>
    <ligand>
        <name>tRNA</name>
        <dbReference type="ChEBI" id="CHEBI:17843"/>
    </ligand>
</feature>
<feature type="binding site" evidence="1">
    <location>
        <position position="66"/>
    </location>
    <ligand>
        <name>tRNA</name>
        <dbReference type="ChEBI" id="CHEBI:17843"/>
    </ligand>
</feature>
<feature type="binding site" evidence="1">
    <location>
        <position position="112"/>
    </location>
    <ligand>
        <name>tRNA</name>
        <dbReference type="ChEBI" id="CHEBI:17843"/>
    </ligand>
</feature>
<feature type="site" description="Discriminates between blocked and unblocked aminoacyl-tRNA" evidence="1">
    <location>
        <position position="9"/>
    </location>
</feature>
<feature type="site" description="Stabilizes the basic form of H active site to accept a proton" evidence="1">
    <location>
        <position position="91"/>
    </location>
</feature>
<name>PTH_BREBN</name>
<proteinExistence type="inferred from homology"/>
<gene>
    <name evidence="1" type="primary">pth</name>
    <name type="ordered locus">BBR47_01010</name>
</gene>
<keyword id="KW-0963">Cytoplasm</keyword>
<keyword id="KW-0378">Hydrolase</keyword>
<keyword id="KW-1185">Reference proteome</keyword>
<keyword id="KW-0694">RNA-binding</keyword>
<keyword id="KW-0820">tRNA-binding</keyword>
<dbReference type="EC" id="3.1.1.29" evidence="1"/>
<dbReference type="EMBL" id="AP008955">
    <property type="protein sequence ID" value="BAH41078.1"/>
    <property type="molecule type" value="Genomic_DNA"/>
</dbReference>
<dbReference type="RefSeq" id="WP_012683873.1">
    <property type="nucleotide sequence ID" value="NC_012491.1"/>
</dbReference>
<dbReference type="SMR" id="C0ZHD7"/>
<dbReference type="STRING" id="358681.BBR47_01010"/>
<dbReference type="KEGG" id="bbe:BBR47_01010"/>
<dbReference type="eggNOG" id="COG0193">
    <property type="taxonomic scope" value="Bacteria"/>
</dbReference>
<dbReference type="HOGENOM" id="CLU_062456_4_1_9"/>
<dbReference type="Proteomes" id="UP000001877">
    <property type="component" value="Chromosome"/>
</dbReference>
<dbReference type="GO" id="GO:0005737">
    <property type="term" value="C:cytoplasm"/>
    <property type="evidence" value="ECO:0007669"/>
    <property type="project" value="UniProtKB-SubCell"/>
</dbReference>
<dbReference type="GO" id="GO:0004045">
    <property type="term" value="F:peptidyl-tRNA hydrolase activity"/>
    <property type="evidence" value="ECO:0007669"/>
    <property type="project" value="UniProtKB-UniRule"/>
</dbReference>
<dbReference type="GO" id="GO:0000049">
    <property type="term" value="F:tRNA binding"/>
    <property type="evidence" value="ECO:0007669"/>
    <property type="project" value="UniProtKB-UniRule"/>
</dbReference>
<dbReference type="GO" id="GO:0006515">
    <property type="term" value="P:protein quality control for misfolded or incompletely synthesized proteins"/>
    <property type="evidence" value="ECO:0007669"/>
    <property type="project" value="UniProtKB-UniRule"/>
</dbReference>
<dbReference type="GO" id="GO:0072344">
    <property type="term" value="P:rescue of stalled ribosome"/>
    <property type="evidence" value="ECO:0007669"/>
    <property type="project" value="UniProtKB-UniRule"/>
</dbReference>
<dbReference type="CDD" id="cd00462">
    <property type="entry name" value="PTH"/>
    <property type="match status" value="1"/>
</dbReference>
<dbReference type="FunFam" id="3.40.50.1470:FF:000001">
    <property type="entry name" value="Peptidyl-tRNA hydrolase"/>
    <property type="match status" value="1"/>
</dbReference>
<dbReference type="Gene3D" id="3.40.50.1470">
    <property type="entry name" value="Peptidyl-tRNA hydrolase"/>
    <property type="match status" value="1"/>
</dbReference>
<dbReference type="HAMAP" id="MF_00083">
    <property type="entry name" value="Pept_tRNA_hydro_bact"/>
    <property type="match status" value="1"/>
</dbReference>
<dbReference type="InterPro" id="IPR001328">
    <property type="entry name" value="Pept_tRNA_hydro"/>
</dbReference>
<dbReference type="InterPro" id="IPR018171">
    <property type="entry name" value="Pept_tRNA_hydro_CS"/>
</dbReference>
<dbReference type="InterPro" id="IPR036416">
    <property type="entry name" value="Pept_tRNA_hydro_sf"/>
</dbReference>
<dbReference type="NCBIfam" id="TIGR00447">
    <property type="entry name" value="pth"/>
    <property type="match status" value="1"/>
</dbReference>
<dbReference type="PANTHER" id="PTHR17224">
    <property type="entry name" value="PEPTIDYL-TRNA HYDROLASE"/>
    <property type="match status" value="1"/>
</dbReference>
<dbReference type="PANTHER" id="PTHR17224:SF1">
    <property type="entry name" value="PEPTIDYL-TRNA HYDROLASE"/>
    <property type="match status" value="1"/>
</dbReference>
<dbReference type="Pfam" id="PF01195">
    <property type="entry name" value="Pept_tRNA_hydro"/>
    <property type="match status" value="1"/>
</dbReference>
<dbReference type="SUPFAM" id="SSF53178">
    <property type="entry name" value="Peptidyl-tRNA hydrolase-like"/>
    <property type="match status" value="1"/>
</dbReference>
<dbReference type="PROSITE" id="PS01195">
    <property type="entry name" value="PEPT_TRNA_HYDROL_1"/>
    <property type="match status" value="1"/>
</dbReference>
<dbReference type="PROSITE" id="PS01196">
    <property type="entry name" value="PEPT_TRNA_HYDROL_2"/>
    <property type="match status" value="1"/>
</dbReference>
<protein>
    <recommendedName>
        <fullName evidence="1">Peptidyl-tRNA hydrolase</fullName>
        <shortName evidence="1">Pth</shortName>
        <ecNumber evidence="1">3.1.1.29</ecNumber>
    </recommendedName>
</protein>
<sequence length="189" mass="21069">MKVIIGLGNPGKKYEDTRHNAGFMAIDKISDKWGIPVTQNKFRALVGEGRIEGEKVLLVKPQTYMNLSGESVAEVLKFYKLIPDDLVVIYDDLDLPTGHLRLREKGSAGGHNGIKSMIQHLGTQEFKRIKVGISRPEPGRSVSDYVLNTFPVAERADIQEAVSLAADACAMWTRESFLKVMNHFNSLKK</sequence>
<reference key="1">
    <citation type="submission" date="2005-03" db="EMBL/GenBank/DDBJ databases">
        <title>Brevibacillus brevis strain 47, complete genome.</title>
        <authorList>
            <person name="Hosoyama A."/>
            <person name="Yamada R."/>
            <person name="Hongo Y."/>
            <person name="Terui Y."/>
            <person name="Ankai A."/>
            <person name="Masuyama W."/>
            <person name="Sekiguchi M."/>
            <person name="Takeda T."/>
            <person name="Asano K."/>
            <person name="Ohji S."/>
            <person name="Ichikawa N."/>
            <person name="Narita S."/>
            <person name="Aoki N."/>
            <person name="Miura H."/>
            <person name="Matsushita S."/>
            <person name="Sekigawa T."/>
            <person name="Yamagata H."/>
            <person name="Yoshikawa H."/>
            <person name="Udaka S."/>
            <person name="Tanikawa S."/>
            <person name="Fujita N."/>
        </authorList>
    </citation>
    <scope>NUCLEOTIDE SEQUENCE [LARGE SCALE GENOMIC DNA]</scope>
    <source>
        <strain>47 / JCM 6285 / NBRC 100599</strain>
    </source>
</reference>
<organism>
    <name type="scientific">Brevibacillus brevis (strain 47 / JCM 6285 / NBRC 100599)</name>
    <dbReference type="NCBI Taxonomy" id="358681"/>
    <lineage>
        <taxon>Bacteria</taxon>
        <taxon>Bacillati</taxon>
        <taxon>Bacillota</taxon>
        <taxon>Bacilli</taxon>
        <taxon>Bacillales</taxon>
        <taxon>Paenibacillaceae</taxon>
        <taxon>Brevibacillus</taxon>
    </lineage>
</organism>
<comment type="function">
    <text evidence="1">Hydrolyzes ribosome-free peptidyl-tRNAs (with 1 or more amino acids incorporated), which drop off the ribosome during protein synthesis, or as a result of ribosome stalling.</text>
</comment>
<comment type="function">
    <text evidence="1">Catalyzes the release of premature peptidyl moieties from peptidyl-tRNA molecules trapped in stalled 50S ribosomal subunits, and thus maintains levels of free tRNAs and 50S ribosomes.</text>
</comment>
<comment type="catalytic activity">
    <reaction evidence="1">
        <text>an N-acyl-L-alpha-aminoacyl-tRNA + H2O = an N-acyl-L-amino acid + a tRNA + H(+)</text>
        <dbReference type="Rhea" id="RHEA:54448"/>
        <dbReference type="Rhea" id="RHEA-COMP:10123"/>
        <dbReference type="Rhea" id="RHEA-COMP:13883"/>
        <dbReference type="ChEBI" id="CHEBI:15377"/>
        <dbReference type="ChEBI" id="CHEBI:15378"/>
        <dbReference type="ChEBI" id="CHEBI:59874"/>
        <dbReference type="ChEBI" id="CHEBI:78442"/>
        <dbReference type="ChEBI" id="CHEBI:138191"/>
        <dbReference type="EC" id="3.1.1.29"/>
    </reaction>
</comment>
<comment type="subunit">
    <text evidence="1">Monomer.</text>
</comment>
<comment type="subcellular location">
    <subcellularLocation>
        <location evidence="1">Cytoplasm</location>
    </subcellularLocation>
</comment>
<comment type="similarity">
    <text evidence="1">Belongs to the PTH family.</text>
</comment>
<accession>C0ZHD7</accession>